<protein>
    <recommendedName>
        <fullName>Replication factor C subunit 3</fullName>
        <shortName>OsRFC3</shortName>
    </recommendedName>
    <alternativeName>
        <fullName>Activator 1 subunit 3</fullName>
    </alternativeName>
</protein>
<evidence type="ECO:0000250" key="1"/>
<evidence type="ECO:0000255" key="2"/>
<evidence type="ECO:0000256" key="3">
    <source>
        <dbReference type="SAM" id="MobiDB-lite"/>
    </source>
</evidence>
<evidence type="ECO:0000269" key="4">
    <source>
    </source>
</evidence>
<evidence type="ECO:0000269" key="5">
    <source ref="1"/>
</evidence>
<evidence type="ECO:0000305" key="6"/>
<reference key="1">
    <citation type="journal article" date="2001" name="Plant Sci.">
        <title>A plant homologue of 36 kDa subunit of replication factor C: molecular cloning and characterization.</title>
        <authorList>
            <person name="Furukawa T."/>
            <person name="Kimura S."/>
            <person name="Ishibashi T."/>
            <person name="Hashimoto J."/>
            <person name="Sakaguchi K."/>
        </authorList>
    </citation>
    <scope>NUCLEOTIDE SEQUENCE [MRNA]</scope>
    <scope>TISSUE SPECIFICITY</scope>
    <scope>INDUCTION</scope>
    <source>
        <strain>cv. Nipponbare</strain>
    </source>
</reference>
<reference key="2">
    <citation type="journal article" date="2005" name="Nature">
        <title>The map-based sequence of the rice genome.</title>
        <authorList>
            <consortium name="International rice genome sequencing project (IRGSP)"/>
        </authorList>
    </citation>
    <scope>NUCLEOTIDE SEQUENCE [LARGE SCALE GENOMIC DNA]</scope>
    <source>
        <strain>cv. Nipponbare</strain>
    </source>
</reference>
<reference key="3">
    <citation type="journal article" date="2008" name="Nucleic Acids Res.">
        <title>The rice annotation project database (RAP-DB): 2008 update.</title>
        <authorList>
            <consortium name="The rice annotation project (RAP)"/>
        </authorList>
    </citation>
    <scope>GENOME REANNOTATION</scope>
    <source>
        <strain>cv. Nipponbare</strain>
    </source>
</reference>
<reference key="4">
    <citation type="journal article" date="2013" name="Rice">
        <title>Improvement of the Oryza sativa Nipponbare reference genome using next generation sequence and optical map data.</title>
        <authorList>
            <person name="Kawahara Y."/>
            <person name="de la Bastide M."/>
            <person name="Hamilton J.P."/>
            <person name="Kanamori H."/>
            <person name="McCombie W.R."/>
            <person name="Ouyang S."/>
            <person name="Schwartz D.C."/>
            <person name="Tanaka T."/>
            <person name="Wu J."/>
            <person name="Zhou S."/>
            <person name="Childs K.L."/>
            <person name="Davidson R.M."/>
            <person name="Lin H."/>
            <person name="Quesada-Ocampo L."/>
            <person name="Vaillancourt B."/>
            <person name="Sakai H."/>
            <person name="Lee S.S."/>
            <person name="Kim J."/>
            <person name="Numa H."/>
            <person name="Itoh T."/>
            <person name="Buell C.R."/>
            <person name="Matsumoto T."/>
        </authorList>
    </citation>
    <scope>GENOME REANNOTATION</scope>
    <source>
        <strain>cv. Nipponbare</strain>
    </source>
</reference>
<reference key="5">
    <citation type="journal article" date="2003" name="Science">
        <title>Collection, mapping, and annotation of over 28,000 cDNA clones from japonica rice.</title>
        <authorList>
            <consortium name="The rice full-length cDNA consortium"/>
        </authorList>
    </citation>
    <scope>NUCLEOTIDE SEQUENCE [LARGE SCALE MRNA]</scope>
    <source>
        <strain>cv. Nipponbare</strain>
    </source>
</reference>
<reference key="6">
    <citation type="journal article" date="2003" name="Plant Mol. Biol.">
        <title>Characterization of all the subunits of replication factor C from a higher plant, rice (Oryza sativa L.), and their relation to development.</title>
        <authorList>
            <person name="Furukawa T."/>
            <person name="Ishibashi T."/>
            <person name="Kimura S."/>
            <person name="Tanaka H."/>
            <person name="Hashimoto J."/>
            <person name="Sakaguchi K."/>
        </authorList>
    </citation>
    <scope>TISSUE SPECIFICITY</scope>
    <source>
        <strain>cv. Nipponbare</strain>
    </source>
</reference>
<proteinExistence type="evidence at transcript level"/>
<feature type="chain" id="PRO_0000422636" description="Replication factor C subunit 3">
    <location>
        <begin position="1"/>
        <end position="361"/>
    </location>
</feature>
<feature type="region of interest" description="Disordered" evidence="3">
    <location>
        <begin position="1"/>
        <end position="39"/>
    </location>
</feature>
<feature type="compositionally biased region" description="Low complexity" evidence="3">
    <location>
        <begin position="1"/>
        <end position="28"/>
    </location>
</feature>
<feature type="binding site" evidence="2">
    <location>
        <begin position="77"/>
        <end position="84"/>
    </location>
    <ligand>
        <name>ATP</name>
        <dbReference type="ChEBI" id="CHEBI:30616"/>
    </ligand>
</feature>
<comment type="function">
    <text evidence="1">May be involved in DNA replication and thus regulate cell proliferation.</text>
</comment>
<comment type="subunit">
    <text evidence="1">Heterotetramer of subunits RFC2, RFC3, RFC4 and RFC5 that can form a complex with RFC1.</text>
</comment>
<comment type="subcellular location">
    <subcellularLocation>
        <location evidence="1">Nucleus</location>
    </subcellularLocation>
</comment>
<comment type="tissue specificity">
    <text evidence="4 5">Expressed in roots, leaves, shoot apical meristem (SAM), flag leaves and panicles.</text>
</comment>
<comment type="induction">
    <text evidence="5">Down-regulated by sucrose starvation.</text>
</comment>
<comment type="similarity">
    <text evidence="6">Belongs to the activator 1 small subunits family.</text>
</comment>
<comment type="sequence caution" evidence="6">
    <conflict type="miscellaneous discrepancy">
        <sequence resource="EMBL-CDS" id="BAB16439"/>
    </conflict>
    <text>Sequencing errors.</text>
</comment>
<keyword id="KW-0067">ATP-binding</keyword>
<keyword id="KW-0235">DNA replication</keyword>
<keyword id="KW-0547">Nucleotide-binding</keyword>
<keyword id="KW-0539">Nucleus</keyword>
<keyword id="KW-1185">Reference proteome</keyword>
<sequence length="361" mass="39626">MAGATAATPMDIDAAAPPPGAAAKGKAPLSSTPGGRAAPWVEKYRPQSLGDVAAHRDIVDTIDRLTNENRLPHLLLYGPPGTGKTSTILAVARKLYGSQYGNMILELNASDERGIDVVRQQIQDFASARSLSFGAKQSVKMVLLDEADAMTKDAQFALRRVIEKHTRSTRFALICNHVNKIIPALQSRCTRFRFAPLDGTHVRERLKHIIQSEGLDVDDGGLTALVRLSNGDMRKALNILQSTHMASKQITEEAVYLCTGNPMPKDIEQIAYWLLNESFSTSFKCISDMKMRKGLALVDIIREVTMFVFKIQMPSDVRIKLINDLADIEYRLSFACNDKLQLGALISTFTGARTAMVAAAH</sequence>
<organism>
    <name type="scientific">Oryza sativa subsp. japonica</name>
    <name type="common">Rice</name>
    <dbReference type="NCBI Taxonomy" id="39947"/>
    <lineage>
        <taxon>Eukaryota</taxon>
        <taxon>Viridiplantae</taxon>
        <taxon>Streptophyta</taxon>
        <taxon>Embryophyta</taxon>
        <taxon>Tracheophyta</taxon>
        <taxon>Spermatophyta</taxon>
        <taxon>Magnoliopsida</taxon>
        <taxon>Liliopsida</taxon>
        <taxon>Poales</taxon>
        <taxon>Poaceae</taxon>
        <taxon>BOP clade</taxon>
        <taxon>Oryzoideae</taxon>
        <taxon>Oryzeae</taxon>
        <taxon>Oryzinae</taxon>
        <taxon>Oryza</taxon>
        <taxon>Oryza sativa</taxon>
    </lineage>
</organism>
<name>RFC3_ORYSJ</name>
<gene>
    <name type="primary">RFC3</name>
    <name type="ordered locus">Os02g0775200</name>
    <name type="ordered locus">LOC_Os02g53500</name>
    <name type="ORF">OJ1448_G06.20</name>
    <name type="ORF">OSJNBb0013K01.1</name>
</gene>
<accession>Q6YZ54</accession>
<accession>A0A0N7KG66</accession>
<accession>Q9FXT5</accession>
<dbReference type="EMBL" id="AB038319">
    <property type="protein sequence ID" value="BAB16439.1"/>
    <property type="status" value="ALT_SEQ"/>
    <property type="molecule type" value="mRNA"/>
</dbReference>
<dbReference type="EMBL" id="AP004853">
    <property type="protein sequence ID" value="BAD17147.1"/>
    <property type="molecule type" value="Genomic_DNA"/>
</dbReference>
<dbReference type="EMBL" id="AP005538">
    <property type="protein sequence ID" value="BAD17365.1"/>
    <property type="molecule type" value="Genomic_DNA"/>
</dbReference>
<dbReference type="EMBL" id="AP008208">
    <property type="protein sequence ID" value="BAF10194.1"/>
    <property type="molecule type" value="Genomic_DNA"/>
</dbReference>
<dbReference type="EMBL" id="AP014958">
    <property type="protein sequence ID" value="BAS81161.1"/>
    <property type="molecule type" value="Genomic_DNA"/>
</dbReference>
<dbReference type="EMBL" id="AK069984">
    <property type="protein sequence ID" value="BAG91711.1"/>
    <property type="molecule type" value="mRNA"/>
</dbReference>
<dbReference type="RefSeq" id="XP_015627208.1">
    <property type="nucleotide sequence ID" value="XM_015771722.1"/>
</dbReference>
<dbReference type="SMR" id="Q6YZ54"/>
<dbReference type="FunCoup" id="Q6YZ54">
    <property type="interactions" value="979"/>
</dbReference>
<dbReference type="STRING" id="39947.Q6YZ54"/>
<dbReference type="PaxDb" id="39947-Q6YZ54"/>
<dbReference type="EnsemblPlants" id="Os02t0775200-01">
    <property type="protein sequence ID" value="Os02t0775200-01"/>
    <property type="gene ID" value="Os02g0775200"/>
</dbReference>
<dbReference type="Gramene" id="Os02t0775200-01">
    <property type="protein sequence ID" value="Os02t0775200-01"/>
    <property type="gene ID" value="Os02g0775200"/>
</dbReference>
<dbReference type="KEGG" id="dosa:Os02g0775200"/>
<dbReference type="eggNOG" id="KOG0990">
    <property type="taxonomic scope" value="Eukaryota"/>
</dbReference>
<dbReference type="HOGENOM" id="CLU_042324_2_1_1"/>
<dbReference type="InParanoid" id="Q6YZ54"/>
<dbReference type="OMA" id="AEDNLPW"/>
<dbReference type="OrthoDB" id="4199794at2759"/>
<dbReference type="PlantReactome" id="R-OSA-9675815">
    <property type="pathway name" value="Leading strand synthesis"/>
</dbReference>
<dbReference type="Proteomes" id="UP000000763">
    <property type="component" value="Chromosome 2"/>
</dbReference>
<dbReference type="Proteomes" id="UP000059680">
    <property type="component" value="Chromosome 2"/>
</dbReference>
<dbReference type="GO" id="GO:0005663">
    <property type="term" value="C:DNA replication factor C complex"/>
    <property type="evidence" value="ECO:0000318"/>
    <property type="project" value="GO_Central"/>
</dbReference>
<dbReference type="GO" id="GO:0005634">
    <property type="term" value="C:nucleus"/>
    <property type="evidence" value="ECO:0000318"/>
    <property type="project" value="GO_Central"/>
</dbReference>
<dbReference type="GO" id="GO:0005524">
    <property type="term" value="F:ATP binding"/>
    <property type="evidence" value="ECO:0007669"/>
    <property type="project" value="UniProtKB-KW"/>
</dbReference>
<dbReference type="GO" id="GO:0016887">
    <property type="term" value="F:ATP hydrolysis activity"/>
    <property type="evidence" value="ECO:0007669"/>
    <property type="project" value="InterPro"/>
</dbReference>
<dbReference type="GO" id="GO:0003677">
    <property type="term" value="F:DNA binding"/>
    <property type="evidence" value="ECO:0007669"/>
    <property type="project" value="InterPro"/>
</dbReference>
<dbReference type="GO" id="GO:0006281">
    <property type="term" value="P:DNA repair"/>
    <property type="evidence" value="ECO:0000318"/>
    <property type="project" value="GO_Central"/>
</dbReference>
<dbReference type="GO" id="GO:0006261">
    <property type="term" value="P:DNA-templated DNA replication"/>
    <property type="evidence" value="ECO:0000318"/>
    <property type="project" value="GO_Central"/>
</dbReference>
<dbReference type="GO" id="GO:0031348">
    <property type="term" value="P:negative regulation of defense response"/>
    <property type="evidence" value="ECO:0007669"/>
    <property type="project" value="EnsemblPlants"/>
</dbReference>
<dbReference type="CDD" id="cd00009">
    <property type="entry name" value="AAA"/>
    <property type="match status" value="1"/>
</dbReference>
<dbReference type="CDD" id="cd18140">
    <property type="entry name" value="HLD_clamp_RFC"/>
    <property type="match status" value="1"/>
</dbReference>
<dbReference type="FunFam" id="1.10.8.60:FF:000028">
    <property type="entry name" value="Replication factor C subunit 5"/>
    <property type="match status" value="1"/>
</dbReference>
<dbReference type="FunFam" id="1.20.272.10:FF:000004">
    <property type="entry name" value="Replication factor C subunit 5"/>
    <property type="match status" value="1"/>
</dbReference>
<dbReference type="FunFam" id="3.40.50.300:FF:000129">
    <property type="entry name" value="Replication factor C subunit 5"/>
    <property type="match status" value="1"/>
</dbReference>
<dbReference type="Gene3D" id="1.10.8.60">
    <property type="match status" value="1"/>
</dbReference>
<dbReference type="Gene3D" id="1.20.272.10">
    <property type="match status" value="1"/>
</dbReference>
<dbReference type="Gene3D" id="3.40.50.300">
    <property type="entry name" value="P-loop containing nucleotide triphosphate hydrolases"/>
    <property type="match status" value="1"/>
</dbReference>
<dbReference type="InterPro" id="IPR003593">
    <property type="entry name" value="AAA+_ATPase"/>
</dbReference>
<dbReference type="InterPro" id="IPR003959">
    <property type="entry name" value="ATPase_AAA_core"/>
</dbReference>
<dbReference type="InterPro" id="IPR008921">
    <property type="entry name" value="DNA_pol3_clamp-load_cplx_C"/>
</dbReference>
<dbReference type="InterPro" id="IPR050238">
    <property type="entry name" value="DNA_Rep/Repair_Clamp_Loader"/>
</dbReference>
<dbReference type="InterPro" id="IPR027417">
    <property type="entry name" value="P-loop_NTPase"/>
</dbReference>
<dbReference type="InterPro" id="IPR013748">
    <property type="entry name" value="Rep_factorC_C"/>
</dbReference>
<dbReference type="InterPro" id="IPR047854">
    <property type="entry name" value="RFC_lid"/>
</dbReference>
<dbReference type="NCBIfam" id="NF001679">
    <property type="entry name" value="PRK00440.1"/>
    <property type="match status" value="1"/>
</dbReference>
<dbReference type="PANTHER" id="PTHR11669">
    <property type="entry name" value="REPLICATION FACTOR C / DNA POLYMERASE III GAMMA-TAU SUBUNIT"/>
    <property type="match status" value="1"/>
</dbReference>
<dbReference type="PANTHER" id="PTHR11669:SF9">
    <property type="entry name" value="REPLICATION FACTOR C SUBUNIT 5"/>
    <property type="match status" value="1"/>
</dbReference>
<dbReference type="Pfam" id="PF00004">
    <property type="entry name" value="AAA"/>
    <property type="match status" value="1"/>
</dbReference>
<dbReference type="Pfam" id="PF21960">
    <property type="entry name" value="RCF1-5-like_lid"/>
    <property type="match status" value="1"/>
</dbReference>
<dbReference type="Pfam" id="PF08542">
    <property type="entry name" value="Rep_fac_C"/>
    <property type="match status" value="1"/>
</dbReference>
<dbReference type="SMART" id="SM00382">
    <property type="entry name" value="AAA"/>
    <property type="match status" value="1"/>
</dbReference>
<dbReference type="SUPFAM" id="SSF52540">
    <property type="entry name" value="P-loop containing nucleoside triphosphate hydrolases"/>
    <property type="match status" value="1"/>
</dbReference>
<dbReference type="SUPFAM" id="SSF48019">
    <property type="entry name" value="post-AAA+ oligomerization domain-like"/>
    <property type="match status" value="1"/>
</dbReference>